<name>ALF_CORGL</name>
<gene>
    <name type="primary">fba</name>
    <name type="synonym">fda</name>
    <name type="ordered locus">Cgl2770</name>
    <name type="ordered locus">cg3068</name>
</gene>
<evidence type="ECO:0000250" key="1"/>
<evidence type="ECO:0000269" key="2">
    <source>
    </source>
</evidence>
<evidence type="ECO:0000305" key="3"/>
<comment type="function">
    <text evidence="1">Catalyzes the aldol condensation of dihydroxyacetone phosphate (DHAP or glycerone-phosphate) with glyceraldehyde 3-phosphate (G3P) to form fructose 1,6-bisphosphate (FBP) in gluconeogenesis and the reverse reaction in glycolysis.</text>
</comment>
<comment type="catalytic activity">
    <reaction>
        <text>beta-D-fructose 1,6-bisphosphate = D-glyceraldehyde 3-phosphate + dihydroxyacetone phosphate</text>
        <dbReference type="Rhea" id="RHEA:14729"/>
        <dbReference type="ChEBI" id="CHEBI:32966"/>
        <dbReference type="ChEBI" id="CHEBI:57642"/>
        <dbReference type="ChEBI" id="CHEBI:59776"/>
        <dbReference type="EC" id="4.1.2.13"/>
    </reaction>
</comment>
<comment type="cofactor">
    <cofactor evidence="1">
        <name>Zn(2+)</name>
        <dbReference type="ChEBI" id="CHEBI:29105"/>
    </cofactor>
    <text evidence="1">Binds 2 Zn(2+) ions per subunit. One is catalytic and the other provides a structural contribution.</text>
</comment>
<comment type="pathway">
    <text>Carbohydrate degradation; glycolysis; D-glyceraldehyde 3-phosphate and glycerone phosphate from D-glucose: step 4/4.</text>
</comment>
<comment type="similarity">
    <text evidence="3">Belongs to the class II fructose-bisphosphate aldolase family.</text>
</comment>
<organism>
    <name type="scientific">Corynebacterium glutamicum (strain ATCC 13032 / DSM 20300 / JCM 1318 / BCRC 11384 / CCUG 27702 / LMG 3730 / NBRC 12168 / NCIMB 10025 / NRRL B-2784 / 534)</name>
    <dbReference type="NCBI Taxonomy" id="196627"/>
    <lineage>
        <taxon>Bacteria</taxon>
        <taxon>Bacillati</taxon>
        <taxon>Actinomycetota</taxon>
        <taxon>Actinomycetes</taxon>
        <taxon>Mycobacteriales</taxon>
        <taxon>Corynebacteriaceae</taxon>
        <taxon>Corynebacterium</taxon>
    </lineage>
</organism>
<keyword id="KW-0903">Direct protein sequencing</keyword>
<keyword id="KW-0324">Glycolysis</keyword>
<keyword id="KW-0456">Lyase</keyword>
<keyword id="KW-0479">Metal-binding</keyword>
<keyword id="KW-1185">Reference proteome</keyword>
<keyword id="KW-0862">Zinc</keyword>
<sequence length="344" mass="37214">MPIATPEVYNEMLDRAKEGGFAFPAINCTSSETINAALKGFAEAESDGIIQFSTGGAEFGSGLAVKNKVKGAVALAAFAHEAAKSYGINVALHTDHCQKEVLDEYVRPLLAISQERVDRGELPLFQSHMWDGSAVPIDENLEIAQELLAKAKAANIILEVEIGVVGGEEDGVEAKAGANLYTSPEDFEKTIDAIGTGEKGRYLLAATFGNVHGVYKPGNVKLRPEVLLEGQQVARKKLGLADDALPFDFVFHGGSGSEKEKIEEALTYGVIKMNVDTDTQYAFTRPIVSHMFENYNGVLKIDGEVGNKKAYDPRSYMKKAEQSMSERIIESCQDLKSVGKTTSK</sequence>
<dbReference type="EC" id="4.1.2.13"/>
<dbReference type="EMBL" id="X17313">
    <property type="protein sequence ID" value="CAA35190.1"/>
    <property type="molecule type" value="Genomic_DNA"/>
</dbReference>
<dbReference type="EMBL" id="BA000036">
    <property type="protein sequence ID" value="BAC00164.1"/>
    <property type="molecule type" value="Genomic_DNA"/>
</dbReference>
<dbReference type="EMBL" id="BX927156">
    <property type="protein sequence ID" value="CAF20791.1"/>
    <property type="molecule type" value="Genomic_DNA"/>
</dbReference>
<dbReference type="PIR" id="S09283">
    <property type="entry name" value="S09283"/>
</dbReference>
<dbReference type="RefSeq" id="NP_601964.1">
    <property type="nucleotide sequence ID" value="NC_003450.3"/>
</dbReference>
<dbReference type="SMR" id="P19537"/>
<dbReference type="STRING" id="196627.cg3068"/>
<dbReference type="KEGG" id="cgb:cg3068"/>
<dbReference type="KEGG" id="cgl:Cgl2770"/>
<dbReference type="PATRIC" id="fig|196627.13.peg.2701"/>
<dbReference type="eggNOG" id="COG0191">
    <property type="taxonomic scope" value="Bacteria"/>
</dbReference>
<dbReference type="HOGENOM" id="CLU_036923_1_0_11"/>
<dbReference type="OrthoDB" id="9803995at2"/>
<dbReference type="BioCyc" id="CORYNE:G18NG-12387-MONOMER"/>
<dbReference type="UniPathway" id="UPA00109">
    <property type="reaction ID" value="UER00183"/>
</dbReference>
<dbReference type="Proteomes" id="UP000000582">
    <property type="component" value="Chromosome"/>
</dbReference>
<dbReference type="Proteomes" id="UP000001009">
    <property type="component" value="Chromosome"/>
</dbReference>
<dbReference type="GO" id="GO:0005829">
    <property type="term" value="C:cytosol"/>
    <property type="evidence" value="ECO:0007669"/>
    <property type="project" value="TreeGrafter"/>
</dbReference>
<dbReference type="GO" id="GO:0004332">
    <property type="term" value="F:fructose-bisphosphate aldolase activity"/>
    <property type="evidence" value="ECO:0007669"/>
    <property type="project" value="UniProtKB-EC"/>
</dbReference>
<dbReference type="GO" id="GO:0008270">
    <property type="term" value="F:zinc ion binding"/>
    <property type="evidence" value="ECO:0007669"/>
    <property type="project" value="InterPro"/>
</dbReference>
<dbReference type="GO" id="GO:0006096">
    <property type="term" value="P:glycolytic process"/>
    <property type="evidence" value="ECO:0007669"/>
    <property type="project" value="UniProtKB-UniPathway"/>
</dbReference>
<dbReference type="Gene3D" id="3.20.20.70">
    <property type="entry name" value="Aldolase class I"/>
    <property type="match status" value="1"/>
</dbReference>
<dbReference type="InterPro" id="IPR013785">
    <property type="entry name" value="Aldolase_TIM"/>
</dbReference>
<dbReference type="InterPro" id="IPR000771">
    <property type="entry name" value="FBA_II"/>
</dbReference>
<dbReference type="InterPro" id="IPR006411">
    <property type="entry name" value="Fruct_bisP_bact"/>
</dbReference>
<dbReference type="NCBIfam" id="TIGR00167">
    <property type="entry name" value="cbbA"/>
    <property type="match status" value="1"/>
</dbReference>
<dbReference type="NCBIfam" id="TIGR01520">
    <property type="entry name" value="FruBisAldo_II_A"/>
    <property type="match status" value="1"/>
</dbReference>
<dbReference type="NCBIfam" id="NF006628">
    <property type="entry name" value="PRK09197.1"/>
    <property type="match status" value="1"/>
</dbReference>
<dbReference type="PANTHER" id="PTHR30559:SF0">
    <property type="entry name" value="FRUCTOSE-BISPHOSPHATE ALDOLASE"/>
    <property type="match status" value="1"/>
</dbReference>
<dbReference type="PANTHER" id="PTHR30559">
    <property type="entry name" value="FRUCTOSE-BISPHOSPHATE ALDOLASE CLASS 2"/>
    <property type="match status" value="1"/>
</dbReference>
<dbReference type="Pfam" id="PF01116">
    <property type="entry name" value="F_bP_aldolase"/>
    <property type="match status" value="1"/>
</dbReference>
<dbReference type="PIRSF" id="PIRSF001359">
    <property type="entry name" value="F_bP_aldolase_II"/>
    <property type="match status" value="1"/>
</dbReference>
<dbReference type="SUPFAM" id="SSF51569">
    <property type="entry name" value="Aldolase"/>
    <property type="match status" value="1"/>
</dbReference>
<dbReference type="PROSITE" id="PS00602">
    <property type="entry name" value="ALDOLASE_CLASS_II_1"/>
    <property type="match status" value="1"/>
</dbReference>
<dbReference type="PROSITE" id="PS00806">
    <property type="entry name" value="ALDOLASE_CLASS_II_2"/>
    <property type="match status" value="1"/>
</dbReference>
<accession>P19537</accession>
<feature type="initiator methionine" description="Removed" evidence="2">
    <location>
        <position position="1"/>
    </location>
</feature>
<feature type="chain" id="PRO_0000178712" description="Fructose-bisphosphate aldolase">
    <location>
        <begin position="2"/>
        <end position="344"/>
    </location>
</feature>
<feature type="active site" description="Proton donor" evidence="1">
    <location>
        <position position="95"/>
    </location>
</feature>
<feature type="binding site" evidence="1">
    <location>
        <position position="53"/>
    </location>
    <ligand>
        <name>D-glyceraldehyde 3-phosphate</name>
        <dbReference type="ChEBI" id="CHEBI:59776"/>
    </ligand>
</feature>
<feature type="binding site" evidence="1">
    <location>
        <position position="96"/>
    </location>
    <ligand>
        <name>Zn(2+)</name>
        <dbReference type="ChEBI" id="CHEBI:29105"/>
        <label>1</label>
        <note>catalytic</note>
    </ligand>
</feature>
<feature type="binding site" evidence="1">
    <location>
        <position position="131"/>
    </location>
    <ligand>
        <name>Zn(2+)</name>
        <dbReference type="ChEBI" id="CHEBI:29105"/>
        <label>2</label>
    </ligand>
</feature>
<feature type="binding site" evidence="1">
    <location>
        <position position="161"/>
    </location>
    <ligand>
        <name>Zn(2+)</name>
        <dbReference type="ChEBI" id="CHEBI:29105"/>
        <label>2</label>
    </ligand>
</feature>
<feature type="binding site" evidence="1">
    <location>
        <position position="212"/>
    </location>
    <ligand>
        <name>Zn(2+)</name>
        <dbReference type="ChEBI" id="CHEBI:29105"/>
        <label>1</label>
        <note>catalytic</note>
    </ligand>
</feature>
<feature type="binding site" evidence="1">
    <location>
        <position position="213"/>
    </location>
    <ligand>
        <name>dihydroxyacetone phosphate</name>
        <dbReference type="ChEBI" id="CHEBI:57642"/>
    </ligand>
</feature>
<feature type="binding site" evidence="1">
    <location>
        <position position="252"/>
    </location>
    <ligand>
        <name>Zn(2+)</name>
        <dbReference type="ChEBI" id="CHEBI:29105"/>
        <label>1</label>
        <note>catalytic</note>
    </ligand>
</feature>
<feature type="binding site" evidence="1">
    <location>
        <begin position="253"/>
        <end position="255"/>
    </location>
    <ligand>
        <name>dihydroxyacetone phosphate</name>
        <dbReference type="ChEBI" id="CHEBI:57642"/>
    </ligand>
</feature>
<feature type="binding site" evidence="1">
    <location>
        <begin position="274"/>
        <end position="277"/>
    </location>
    <ligand>
        <name>dihydroxyacetone phosphate</name>
        <dbReference type="ChEBI" id="CHEBI:57642"/>
    </ligand>
</feature>
<feature type="sequence conflict" description="In Ref. 1; CAA35190." evidence="3" ref="1">
    <original>Q</original>
    <variation>H</variation>
    <location>
        <position position="280"/>
    </location>
</feature>
<reference key="1">
    <citation type="journal article" date="1989" name="Mol. Microbiol.">
        <title>Molecular cloning, nucleotide sequence and fine-structural analysis of the Corynebacterium glutamicum fda gene: structural comparison of C. glutamicum fructose-1,6-biphosphate aldolase to class I and class II aldolases.</title>
        <authorList>
            <person name="von der Osten C.H."/>
            <person name="Barbas C.F. III"/>
            <person name="Wong C.-H."/>
            <person name="Sinskey A.J."/>
        </authorList>
    </citation>
    <scope>NUCLEOTIDE SEQUENCE [GENOMIC DNA]</scope>
    <scope>PROTEIN SEQUENCE OF 2-11</scope>
    <source>
        <strain>ATCC 13059 / LMG 3658 / NCIB 10332 / AS019 / 613</strain>
    </source>
</reference>
<reference key="2">
    <citation type="journal article" date="2003" name="Appl. Microbiol. Biotechnol.">
        <title>The Corynebacterium glutamicum genome: features and impacts on biotechnological processes.</title>
        <authorList>
            <person name="Ikeda M."/>
            <person name="Nakagawa S."/>
        </authorList>
    </citation>
    <scope>NUCLEOTIDE SEQUENCE [LARGE SCALE GENOMIC DNA]</scope>
    <source>
        <strain>ATCC 13032 / DSM 20300 / JCM 1318 / BCRC 11384 / CCUG 27702 / LMG 3730 / NBRC 12168 / NCIMB 10025 / NRRL B-2784 / 534</strain>
    </source>
</reference>
<reference key="3">
    <citation type="journal article" date="2003" name="J. Biotechnol.">
        <title>The complete Corynebacterium glutamicum ATCC 13032 genome sequence and its impact on the production of L-aspartate-derived amino acids and vitamins.</title>
        <authorList>
            <person name="Kalinowski J."/>
            <person name="Bathe B."/>
            <person name="Bartels D."/>
            <person name="Bischoff N."/>
            <person name="Bott M."/>
            <person name="Burkovski A."/>
            <person name="Dusch N."/>
            <person name="Eggeling L."/>
            <person name="Eikmanns B.J."/>
            <person name="Gaigalat L."/>
            <person name="Goesmann A."/>
            <person name="Hartmann M."/>
            <person name="Huthmacher K."/>
            <person name="Kraemer R."/>
            <person name="Linke B."/>
            <person name="McHardy A.C."/>
            <person name="Meyer F."/>
            <person name="Moeckel B."/>
            <person name="Pfefferle W."/>
            <person name="Puehler A."/>
            <person name="Rey D.A."/>
            <person name="Rueckert C."/>
            <person name="Rupp O."/>
            <person name="Sahm H."/>
            <person name="Wendisch V.F."/>
            <person name="Wiegraebe I."/>
            <person name="Tauch A."/>
        </authorList>
    </citation>
    <scope>NUCLEOTIDE SEQUENCE [LARGE SCALE GENOMIC DNA]</scope>
    <source>
        <strain>ATCC 13032 / DSM 20300 / JCM 1318 / BCRC 11384 / CCUG 27702 / LMG 3730 / NBRC 12168 / NCIMB 10025 / NRRL B-2784 / 534</strain>
    </source>
</reference>
<protein>
    <recommendedName>
        <fullName>Fructose-bisphosphate aldolase</fullName>
        <shortName>FBP aldolase</shortName>
        <shortName>FBPA</shortName>
        <ecNumber>4.1.2.13</ecNumber>
    </recommendedName>
    <alternativeName>
        <fullName>Fructose-1,6-bisphosphate aldolase</fullName>
    </alternativeName>
</protein>
<proteinExistence type="evidence at protein level"/>